<sequence>MGSNYIVIEGLEGAGKTTARDVVVETLEQLGIRNMIFTREPGGTQLAEKLRSLVLDIRSVGDEVITDKAEVLMFYAARVQLVETVIKPALAQGVWVIGDRHDLSTQAYQGGGRGIDQTMLATLRDAVLGDFRPDLTLYLDVTPEVGLKRARARGDLDRIEQESFDFFNRTRARYLELAAQDPRIRTIDATQPLDAVMRDIRATVTTWVQGQAA</sequence>
<protein>
    <recommendedName>
        <fullName evidence="1">Thymidylate kinase</fullName>
        <ecNumber evidence="1">2.7.4.9</ecNumber>
    </recommendedName>
    <alternativeName>
        <fullName evidence="1">dTMP kinase</fullName>
    </alternativeName>
</protein>
<gene>
    <name evidence="1" type="primary">tmk</name>
    <name type="ordered locus">SARI_01792</name>
</gene>
<feature type="chain" id="PRO_1000076974" description="Thymidylate kinase">
    <location>
        <begin position="1"/>
        <end position="213"/>
    </location>
</feature>
<feature type="binding site" evidence="1">
    <location>
        <begin position="10"/>
        <end position="17"/>
    </location>
    <ligand>
        <name>ATP</name>
        <dbReference type="ChEBI" id="CHEBI:30616"/>
    </ligand>
</feature>
<comment type="function">
    <text evidence="1">Phosphorylation of dTMP to form dTDP in both de novo and salvage pathways of dTTP synthesis.</text>
</comment>
<comment type="catalytic activity">
    <reaction evidence="1">
        <text>dTMP + ATP = dTDP + ADP</text>
        <dbReference type="Rhea" id="RHEA:13517"/>
        <dbReference type="ChEBI" id="CHEBI:30616"/>
        <dbReference type="ChEBI" id="CHEBI:58369"/>
        <dbReference type="ChEBI" id="CHEBI:63528"/>
        <dbReference type="ChEBI" id="CHEBI:456216"/>
        <dbReference type="EC" id="2.7.4.9"/>
    </reaction>
</comment>
<comment type="similarity">
    <text evidence="1">Belongs to the thymidylate kinase family.</text>
</comment>
<dbReference type="EC" id="2.7.4.9" evidence="1"/>
<dbReference type="EMBL" id="CP000880">
    <property type="protein sequence ID" value="ABX21678.1"/>
    <property type="molecule type" value="Genomic_DNA"/>
</dbReference>
<dbReference type="SMR" id="A9MGB6"/>
<dbReference type="STRING" id="41514.SARI_01792"/>
<dbReference type="KEGG" id="ses:SARI_01792"/>
<dbReference type="HOGENOM" id="CLU_049131_0_1_6"/>
<dbReference type="Proteomes" id="UP000002084">
    <property type="component" value="Chromosome"/>
</dbReference>
<dbReference type="GO" id="GO:0005829">
    <property type="term" value="C:cytosol"/>
    <property type="evidence" value="ECO:0007669"/>
    <property type="project" value="TreeGrafter"/>
</dbReference>
<dbReference type="GO" id="GO:0005524">
    <property type="term" value="F:ATP binding"/>
    <property type="evidence" value="ECO:0007669"/>
    <property type="project" value="UniProtKB-UniRule"/>
</dbReference>
<dbReference type="GO" id="GO:0004798">
    <property type="term" value="F:dTMP kinase activity"/>
    <property type="evidence" value="ECO:0007669"/>
    <property type="project" value="UniProtKB-UniRule"/>
</dbReference>
<dbReference type="GO" id="GO:0006233">
    <property type="term" value="P:dTDP biosynthetic process"/>
    <property type="evidence" value="ECO:0007669"/>
    <property type="project" value="InterPro"/>
</dbReference>
<dbReference type="GO" id="GO:0006235">
    <property type="term" value="P:dTTP biosynthetic process"/>
    <property type="evidence" value="ECO:0007669"/>
    <property type="project" value="UniProtKB-UniRule"/>
</dbReference>
<dbReference type="GO" id="GO:0006227">
    <property type="term" value="P:dUDP biosynthetic process"/>
    <property type="evidence" value="ECO:0007669"/>
    <property type="project" value="TreeGrafter"/>
</dbReference>
<dbReference type="CDD" id="cd01672">
    <property type="entry name" value="TMPK"/>
    <property type="match status" value="1"/>
</dbReference>
<dbReference type="FunFam" id="3.40.50.300:FF:000321">
    <property type="entry name" value="Thymidylate kinase"/>
    <property type="match status" value="1"/>
</dbReference>
<dbReference type="Gene3D" id="3.40.50.300">
    <property type="entry name" value="P-loop containing nucleotide triphosphate hydrolases"/>
    <property type="match status" value="1"/>
</dbReference>
<dbReference type="HAMAP" id="MF_00165">
    <property type="entry name" value="Thymidylate_kinase"/>
    <property type="match status" value="1"/>
</dbReference>
<dbReference type="InterPro" id="IPR027417">
    <property type="entry name" value="P-loop_NTPase"/>
</dbReference>
<dbReference type="InterPro" id="IPR039430">
    <property type="entry name" value="Thymidylate_kin-like_dom"/>
</dbReference>
<dbReference type="InterPro" id="IPR018095">
    <property type="entry name" value="Thymidylate_kin_CS"/>
</dbReference>
<dbReference type="InterPro" id="IPR018094">
    <property type="entry name" value="Thymidylate_kinase"/>
</dbReference>
<dbReference type="NCBIfam" id="TIGR00041">
    <property type="entry name" value="DTMP_kinase"/>
    <property type="match status" value="1"/>
</dbReference>
<dbReference type="PANTHER" id="PTHR10344">
    <property type="entry name" value="THYMIDYLATE KINASE"/>
    <property type="match status" value="1"/>
</dbReference>
<dbReference type="PANTHER" id="PTHR10344:SF4">
    <property type="entry name" value="UMP-CMP KINASE 2, MITOCHONDRIAL"/>
    <property type="match status" value="1"/>
</dbReference>
<dbReference type="Pfam" id="PF02223">
    <property type="entry name" value="Thymidylate_kin"/>
    <property type="match status" value="1"/>
</dbReference>
<dbReference type="SUPFAM" id="SSF52540">
    <property type="entry name" value="P-loop containing nucleoside triphosphate hydrolases"/>
    <property type="match status" value="1"/>
</dbReference>
<dbReference type="PROSITE" id="PS01331">
    <property type="entry name" value="THYMIDYLATE_KINASE"/>
    <property type="match status" value="1"/>
</dbReference>
<name>KTHY_SALAR</name>
<keyword id="KW-0067">ATP-binding</keyword>
<keyword id="KW-0418">Kinase</keyword>
<keyword id="KW-0545">Nucleotide biosynthesis</keyword>
<keyword id="KW-0547">Nucleotide-binding</keyword>
<keyword id="KW-1185">Reference proteome</keyword>
<keyword id="KW-0808">Transferase</keyword>
<proteinExistence type="inferred from homology"/>
<accession>A9MGB6</accession>
<evidence type="ECO:0000255" key="1">
    <source>
        <dbReference type="HAMAP-Rule" id="MF_00165"/>
    </source>
</evidence>
<organism>
    <name type="scientific">Salmonella arizonae (strain ATCC BAA-731 / CDC346-86 / RSK2980)</name>
    <dbReference type="NCBI Taxonomy" id="41514"/>
    <lineage>
        <taxon>Bacteria</taxon>
        <taxon>Pseudomonadati</taxon>
        <taxon>Pseudomonadota</taxon>
        <taxon>Gammaproteobacteria</taxon>
        <taxon>Enterobacterales</taxon>
        <taxon>Enterobacteriaceae</taxon>
        <taxon>Salmonella</taxon>
    </lineage>
</organism>
<reference key="1">
    <citation type="submission" date="2007-11" db="EMBL/GenBank/DDBJ databases">
        <authorList>
            <consortium name="The Salmonella enterica serovar Arizonae Genome Sequencing Project"/>
            <person name="McClelland M."/>
            <person name="Sanderson E.K."/>
            <person name="Porwollik S."/>
            <person name="Spieth J."/>
            <person name="Clifton W.S."/>
            <person name="Fulton R."/>
            <person name="Chunyan W."/>
            <person name="Wollam A."/>
            <person name="Shah N."/>
            <person name="Pepin K."/>
            <person name="Bhonagiri V."/>
            <person name="Nash W."/>
            <person name="Johnson M."/>
            <person name="Thiruvilangam P."/>
            <person name="Wilson R."/>
        </authorList>
    </citation>
    <scope>NUCLEOTIDE SEQUENCE [LARGE SCALE GENOMIC DNA]</scope>
    <source>
        <strain>ATCC BAA-731 / CDC346-86 / RSK2980</strain>
    </source>
</reference>